<feature type="chain" id="PRO_1000094854" description="Deoxyribose-phosphate aldolase">
    <location>
        <begin position="1"/>
        <end position="220"/>
    </location>
</feature>
<feature type="active site" description="Proton donor/acceptor" evidence="1">
    <location>
        <position position="92"/>
    </location>
</feature>
<feature type="active site" description="Schiff-base intermediate with acetaldehyde" evidence="1">
    <location>
        <position position="155"/>
    </location>
</feature>
<feature type="active site" description="Proton donor/acceptor" evidence="1">
    <location>
        <position position="184"/>
    </location>
</feature>
<comment type="function">
    <text evidence="1">Catalyzes a reversible aldol reaction between acetaldehyde and D-glyceraldehyde 3-phosphate to generate 2-deoxy-D-ribose 5-phosphate.</text>
</comment>
<comment type="catalytic activity">
    <reaction evidence="1">
        <text>2-deoxy-D-ribose 5-phosphate = D-glyceraldehyde 3-phosphate + acetaldehyde</text>
        <dbReference type="Rhea" id="RHEA:12821"/>
        <dbReference type="ChEBI" id="CHEBI:15343"/>
        <dbReference type="ChEBI" id="CHEBI:59776"/>
        <dbReference type="ChEBI" id="CHEBI:62877"/>
        <dbReference type="EC" id="4.1.2.4"/>
    </reaction>
</comment>
<comment type="pathway">
    <text evidence="1">Carbohydrate degradation; 2-deoxy-D-ribose 1-phosphate degradation; D-glyceraldehyde 3-phosphate and acetaldehyde from 2-deoxy-alpha-D-ribose 1-phosphate: step 2/2.</text>
</comment>
<comment type="subcellular location">
    <subcellularLocation>
        <location evidence="1">Cytoplasm</location>
    </subcellularLocation>
</comment>
<comment type="similarity">
    <text evidence="1">Belongs to the DeoC/FbaB aldolase family. DeoC type 1 subfamily.</text>
</comment>
<reference key="1">
    <citation type="submission" date="2008-04" db="EMBL/GenBank/DDBJ databases">
        <title>Complete sequence of chromosome of Natranaerobius thermophilus JW/NM-WN-LF.</title>
        <authorList>
            <consortium name="US DOE Joint Genome Institute"/>
            <person name="Copeland A."/>
            <person name="Lucas S."/>
            <person name="Lapidus A."/>
            <person name="Glavina del Rio T."/>
            <person name="Dalin E."/>
            <person name="Tice H."/>
            <person name="Bruce D."/>
            <person name="Goodwin L."/>
            <person name="Pitluck S."/>
            <person name="Chertkov O."/>
            <person name="Brettin T."/>
            <person name="Detter J.C."/>
            <person name="Han C."/>
            <person name="Kuske C.R."/>
            <person name="Schmutz J."/>
            <person name="Larimer F."/>
            <person name="Land M."/>
            <person name="Hauser L."/>
            <person name="Kyrpides N."/>
            <person name="Lykidis A."/>
            <person name="Mesbah N.M."/>
            <person name="Wiegel J."/>
        </authorList>
    </citation>
    <scope>NUCLEOTIDE SEQUENCE [LARGE SCALE GENOMIC DNA]</scope>
    <source>
        <strain>ATCC BAA-1301 / DSM 18059 / JW/NM-WN-LF</strain>
    </source>
</reference>
<evidence type="ECO:0000255" key="1">
    <source>
        <dbReference type="HAMAP-Rule" id="MF_00114"/>
    </source>
</evidence>
<accession>B2A4J4</accession>
<name>DEOC_NATTJ</name>
<keyword id="KW-0963">Cytoplasm</keyword>
<keyword id="KW-0456">Lyase</keyword>
<keyword id="KW-1185">Reference proteome</keyword>
<keyword id="KW-0704">Schiff base</keyword>
<protein>
    <recommendedName>
        <fullName evidence="1">Deoxyribose-phosphate aldolase</fullName>
        <shortName evidence="1">DERA</shortName>
        <ecNumber evidence="1">4.1.2.4</ecNumber>
    </recommendedName>
    <alternativeName>
        <fullName evidence="1">2-deoxy-D-ribose 5-phosphate aldolase</fullName>
    </alternativeName>
    <alternativeName>
        <fullName evidence="1">Phosphodeoxyriboaldolase</fullName>
        <shortName evidence="1">Deoxyriboaldolase</shortName>
    </alternativeName>
</protein>
<gene>
    <name evidence="1" type="primary">deoC</name>
    <name type="ordered locus">Nther_1597</name>
</gene>
<proteinExistence type="inferred from homology"/>
<organism>
    <name type="scientific">Natranaerobius thermophilus (strain ATCC BAA-1301 / DSM 18059 / JW/NM-WN-LF)</name>
    <dbReference type="NCBI Taxonomy" id="457570"/>
    <lineage>
        <taxon>Bacteria</taxon>
        <taxon>Bacillati</taxon>
        <taxon>Bacillota</taxon>
        <taxon>Clostridia</taxon>
        <taxon>Natranaerobiales</taxon>
        <taxon>Natranaerobiaceae</taxon>
        <taxon>Natranaerobius</taxon>
    </lineage>
</organism>
<dbReference type="EC" id="4.1.2.4" evidence="1"/>
<dbReference type="EMBL" id="CP001034">
    <property type="protein sequence ID" value="ACB85171.1"/>
    <property type="molecule type" value="Genomic_DNA"/>
</dbReference>
<dbReference type="RefSeq" id="WP_012448040.1">
    <property type="nucleotide sequence ID" value="NC_010718.1"/>
</dbReference>
<dbReference type="SMR" id="B2A4J4"/>
<dbReference type="FunCoup" id="B2A4J4">
    <property type="interactions" value="239"/>
</dbReference>
<dbReference type="STRING" id="457570.Nther_1597"/>
<dbReference type="KEGG" id="nth:Nther_1597"/>
<dbReference type="eggNOG" id="COG0274">
    <property type="taxonomic scope" value="Bacteria"/>
</dbReference>
<dbReference type="HOGENOM" id="CLU_053595_0_2_9"/>
<dbReference type="InParanoid" id="B2A4J4"/>
<dbReference type="OrthoDB" id="9778711at2"/>
<dbReference type="UniPathway" id="UPA00002">
    <property type="reaction ID" value="UER00468"/>
</dbReference>
<dbReference type="Proteomes" id="UP000001683">
    <property type="component" value="Chromosome"/>
</dbReference>
<dbReference type="GO" id="GO:0005737">
    <property type="term" value="C:cytoplasm"/>
    <property type="evidence" value="ECO:0007669"/>
    <property type="project" value="UniProtKB-SubCell"/>
</dbReference>
<dbReference type="GO" id="GO:0004139">
    <property type="term" value="F:deoxyribose-phosphate aldolase activity"/>
    <property type="evidence" value="ECO:0007669"/>
    <property type="project" value="UniProtKB-UniRule"/>
</dbReference>
<dbReference type="GO" id="GO:0006018">
    <property type="term" value="P:2-deoxyribose 1-phosphate catabolic process"/>
    <property type="evidence" value="ECO:0007669"/>
    <property type="project" value="UniProtKB-UniRule"/>
</dbReference>
<dbReference type="GO" id="GO:0016052">
    <property type="term" value="P:carbohydrate catabolic process"/>
    <property type="evidence" value="ECO:0007669"/>
    <property type="project" value="TreeGrafter"/>
</dbReference>
<dbReference type="GO" id="GO:0009264">
    <property type="term" value="P:deoxyribonucleotide catabolic process"/>
    <property type="evidence" value="ECO:0007669"/>
    <property type="project" value="InterPro"/>
</dbReference>
<dbReference type="CDD" id="cd00959">
    <property type="entry name" value="DeoC"/>
    <property type="match status" value="1"/>
</dbReference>
<dbReference type="FunFam" id="3.20.20.70:FF:000044">
    <property type="entry name" value="Deoxyribose-phosphate aldolase"/>
    <property type="match status" value="1"/>
</dbReference>
<dbReference type="Gene3D" id="3.20.20.70">
    <property type="entry name" value="Aldolase class I"/>
    <property type="match status" value="1"/>
</dbReference>
<dbReference type="HAMAP" id="MF_00114">
    <property type="entry name" value="DeoC_type1"/>
    <property type="match status" value="1"/>
</dbReference>
<dbReference type="InterPro" id="IPR013785">
    <property type="entry name" value="Aldolase_TIM"/>
</dbReference>
<dbReference type="InterPro" id="IPR011343">
    <property type="entry name" value="DeoC"/>
</dbReference>
<dbReference type="InterPro" id="IPR002915">
    <property type="entry name" value="DeoC/FbaB/LacD_aldolase"/>
</dbReference>
<dbReference type="InterPro" id="IPR028581">
    <property type="entry name" value="DeoC_typeI"/>
</dbReference>
<dbReference type="NCBIfam" id="TIGR00126">
    <property type="entry name" value="deoC"/>
    <property type="match status" value="1"/>
</dbReference>
<dbReference type="PANTHER" id="PTHR10889">
    <property type="entry name" value="DEOXYRIBOSE-PHOSPHATE ALDOLASE"/>
    <property type="match status" value="1"/>
</dbReference>
<dbReference type="PANTHER" id="PTHR10889:SF1">
    <property type="entry name" value="DEOXYRIBOSE-PHOSPHATE ALDOLASE"/>
    <property type="match status" value="1"/>
</dbReference>
<dbReference type="Pfam" id="PF01791">
    <property type="entry name" value="DeoC"/>
    <property type="match status" value="1"/>
</dbReference>
<dbReference type="PIRSF" id="PIRSF001357">
    <property type="entry name" value="DeoC"/>
    <property type="match status" value="1"/>
</dbReference>
<dbReference type="SMART" id="SM01133">
    <property type="entry name" value="DeoC"/>
    <property type="match status" value="1"/>
</dbReference>
<dbReference type="SUPFAM" id="SSF51569">
    <property type="entry name" value="Aldolase"/>
    <property type="match status" value="1"/>
</dbReference>
<sequence length="220" mass="23514">MTINNINSFIDHTQLKPEATPGQIEKLCQEAIDYKFKAVCVNPVHVNLAANLLKDSEVEIASVVGFPLGASATDVKEYEAKKAVEHGASEIDMVINIGLLKNEQDMEVIEDISSVVNTVPVGIVVKVIIETCLLSDEEKIKACELAKRAGAHYVKTSTGFSSSGATVEDVKIMKKTVGEKLGVKASGGIRDLETAQKMIEAGATRIGASKSVEIVKSQSN</sequence>